<name>RL13_METS4</name>
<keyword id="KW-0687">Ribonucleoprotein</keyword>
<keyword id="KW-0689">Ribosomal protein</keyword>
<protein>
    <recommendedName>
        <fullName evidence="1">Large ribosomal subunit protein uL13</fullName>
    </recommendedName>
    <alternativeName>
        <fullName evidence="2">50S ribosomal protein L13</fullName>
    </alternativeName>
</protein>
<sequence>MKTFSLKPADVEKKWVIIDAEGLVVGRLASIVAMRLRGKHKPQYTPHVDCGDNVIVINADKVKFTGRKYDQKVYYHHTGFPGGIKERSAKYILEGRFPERVVEKAVERMLPRGPLFRRILGNLRVYKGSEHPHAAQQPETLDVAALNRKNVSA</sequence>
<proteinExistence type="inferred from homology"/>
<feature type="chain" id="PRO_1000144152" description="Large ribosomal subunit protein uL13">
    <location>
        <begin position="1"/>
        <end position="153"/>
    </location>
</feature>
<gene>
    <name evidence="1" type="primary">rplM</name>
    <name type="ordered locus">M446_4612</name>
</gene>
<dbReference type="EMBL" id="CP000943">
    <property type="protein sequence ID" value="ACA18952.1"/>
    <property type="molecule type" value="Genomic_DNA"/>
</dbReference>
<dbReference type="RefSeq" id="WP_012334341.1">
    <property type="nucleotide sequence ID" value="NC_010511.1"/>
</dbReference>
<dbReference type="SMR" id="B0UQW6"/>
<dbReference type="STRING" id="426117.M446_4612"/>
<dbReference type="KEGG" id="met:M446_4612"/>
<dbReference type="eggNOG" id="COG0102">
    <property type="taxonomic scope" value="Bacteria"/>
</dbReference>
<dbReference type="HOGENOM" id="CLU_082184_2_0_5"/>
<dbReference type="GO" id="GO:0022625">
    <property type="term" value="C:cytosolic large ribosomal subunit"/>
    <property type="evidence" value="ECO:0007669"/>
    <property type="project" value="TreeGrafter"/>
</dbReference>
<dbReference type="GO" id="GO:0003729">
    <property type="term" value="F:mRNA binding"/>
    <property type="evidence" value="ECO:0007669"/>
    <property type="project" value="TreeGrafter"/>
</dbReference>
<dbReference type="GO" id="GO:0003735">
    <property type="term" value="F:structural constituent of ribosome"/>
    <property type="evidence" value="ECO:0007669"/>
    <property type="project" value="InterPro"/>
</dbReference>
<dbReference type="GO" id="GO:0017148">
    <property type="term" value="P:negative regulation of translation"/>
    <property type="evidence" value="ECO:0007669"/>
    <property type="project" value="TreeGrafter"/>
</dbReference>
<dbReference type="GO" id="GO:0006412">
    <property type="term" value="P:translation"/>
    <property type="evidence" value="ECO:0007669"/>
    <property type="project" value="UniProtKB-UniRule"/>
</dbReference>
<dbReference type="CDD" id="cd00392">
    <property type="entry name" value="Ribosomal_L13"/>
    <property type="match status" value="1"/>
</dbReference>
<dbReference type="FunFam" id="3.90.1180.10:FF:000001">
    <property type="entry name" value="50S ribosomal protein L13"/>
    <property type="match status" value="1"/>
</dbReference>
<dbReference type="Gene3D" id="3.90.1180.10">
    <property type="entry name" value="Ribosomal protein L13"/>
    <property type="match status" value="1"/>
</dbReference>
<dbReference type="HAMAP" id="MF_01366">
    <property type="entry name" value="Ribosomal_uL13"/>
    <property type="match status" value="1"/>
</dbReference>
<dbReference type="InterPro" id="IPR005822">
    <property type="entry name" value="Ribosomal_uL13"/>
</dbReference>
<dbReference type="InterPro" id="IPR005823">
    <property type="entry name" value="Ribosomal_uL13_bac-type"/>
</dbReference>
<dbReference type="InterPro" id="IPR036899">
    <property type="entry name" value="Ribosomal_uL13_sf"/>
</dbReference>
<dbReference type="NCBIfam" id="TIGR01066">
    <property type="entry name" value="rplM_bact"/>
    <property type="match status" value="1"/>
</dbReference>
<dbReference type="PANTHER" id="PTHR11545:SF2">
    <property type="entry name" value="LARGE RIBOSOMAL SUBUNIT PROTEIN UL13M"/>
    <property type="match status" value="1"/>
</dbReference>
<dbReference type="PANTHER" id="PTHR11545">
    <property type="entry name" value="RIBOSOMAL PROTEIN L13"/>
    <property type="match status" value="1"/>
</dbReference>
<dbReference type="Pfam" id="PF00572">
    <property type="entry name" value="Ribosomal_L13"/>
    <property type="match status" value="1"/>
</dbReference>
<dbReference type="PIRSF" id="PIRSF002181">
    <property type="entry name" value="Ribosomal_L13"/>
    <property type="match status" value="1"/>
</dbReference>
<dbReference type="SUPFAM" id="SSF52161">
    <property type="entry name" value="Ribosomal protein L13"/>
    <property type="match status" value="1"/>
</dbReference>
<reference key="1">
    <citation type="submission" date="2008-02" db="EMBL/GenBank/DDBJ databases">
        <title>Complete sequence of chromosome of Methylobacterium sp. 4-46.</title>
        <authorList>
            <consortium name="US DOE Joint Genome Institute"/>
            <person name="Copeland A."/>
            <person name="Lucas S."/>
            <person name="Lapidus A."/>
            <person name="Glavina del Rio T."/>
            <person name="Dalin E."/>
            <person name="Tice H."/>
            <person name="Bruce D."/>
            <person name="Goodwin L."/>
            <person name="Pitluck S."/>
            <person name="Chertkov O."/>
            <person name="Brettin T."/>
            <person name="Detter J.C."/>
            <person name="Han C."/>
            <person name="Kuske C.R."/>
            <person name="Schmutz J."/>
            <person name="Larimer F."/>
            <person name="Land M."/>
            <person name="Hauser L."/>
            <person name="Kyrpides N."/>
            <person name="Ivanova N."/>
            <person name="Marx C.J."/>
            <person name="Richardson P."/>
        </authorList>
    </citation>
    <scope>NUCLEOTIDE SEQUENCE [LARGE SCALE GENOMIC DNA]</scope>
    <source>
        <strain>4-46</strain>
    </source>
</reference>
<accession>B0UQW6</accession>
<organism>
    <name type="scientific">Methylobacterium sp. (strain 4-46)</name>
    <dbReference type="NCBI Taxonomy" id="426117"/>
    <lineage>
        <taxon>Bacteria</taxon>
        <taxon>Pseudomonadati</taxon>
        <taxon>Pseudomonadota</taxon>
        <taxon>Alphaproteobacteria</taxon>
        <taxon>Hyphomicrobiales</taxon>
        <taxon>Methylobacteriaceae</taxon>
        <taxon>Methylobacterium</taxon>
    </lineage>
</organism>
<evidence type="ECO:0000255" key="1">
    <source>
        <dbReference type="HAMAP-Rule" id="MF_01366"/>
    </source>
</evidence>
<evidence type="ECO:0000305" key="2"/>
<comment type="function">
    <text evidence="1">This protein is one of the early assembly proteins of the 50S ribosomal subunit, although it is not seen to bind rRNA by itself. It is important during the early stages of 50S assembly.</text>
</comment>
<comment type="subunit">
    <text evidence="1">Part of the 50S ribosomal subunit.</text>
</comment>
<comment type="similarity">
    <text evidence="1">Belongs to the universal ribosomal protein uL13 family.</text>
</comment>